<comment type="function">
    <text evidence="1">IGPS catalyzes the conversion of PRFAR and glutamine to IGP, AICAR and glutamate. The HisH subunit catalyzes the hydrolysis of glutamine to glutamate and ammonia as part of the synthesis of IGP and AICAR. The resulting ammonia molecule is channeled to the active site of HisF.</text>
</comment>
<comment type="catalytic activity">
    <reaction evidence="1">
        <text>5-[(5-phospho-1-deoxy-D-ribulos-1-ylimino)methylamino]-1-(5-phospho-beta-D-ribosyl)imidazole-4-carboxamide + L-glutamine = D-erythro-1-(imidazol-4-yl)glycerol 3-phosphate + 5-amino-1-(5-phospho-beta-D-ribosyl)imidazole-4-carboxamide + L-glutamate + H(+)</text>
        <dbReference type="Rhea" id="RHEA:24793"/>
        <dbReference type="ChEBI" id="CHEBI:15378"/>
        <dbReference type="ChEBI" id="CHEBI:29985"/>
        <dbReference type="ChEBI" id="CHEBI:58278"/>
        <dbReference type="ChEBI" id="CHEBI:58359"/>
        <dbReference type="ChEBI" id="CHEBI:58475"/>
        <dbReference type="ChEBI" id="CHEBI:58525"/>
        <dbReference type="EC" id="4.3.2.10"/>
    </reaction>
</comment>
<comment type="catalytic activity">
    <reaction evidence="1">
        <text>L-glutamine + H2O = L-glutamate + NH4(+)</text>
        <dbReference type="Rhea" id="RHEA:15889"/>
        <dbReference type="ChEBI" id="CHEBI:15377"/>
        <dbReference type="ChEBI" id="CHEBI:28938"/>
        <dbReference type="ChEBI" id="CHEBI:29985"/>
        <dbReference type="ChEBI" id="CHEBI:58359"/>
        <dbReference type="EC" id="3.5.1.2"/>
    </reaction>
</comment>
<comment type="pathway">
    <text evidence="1">Amino-acid biosynthesis; L-histidine biosynthesis; L-histidine from 5-phospho-alpha-D-ribose 1-diphosphate: step 5/9.</text>
</comment>
<comment type="subunit">
    <text evidence="1">Heterodimer of HisH and HisF.</text>
</comment>
<comment type="subcellular location">
    <subcellularLocation>
        <location evidence="1">Cytoplasm</location>
    </subcellularLocation>
</comment>
<name>HIS5_PROM4</name>
<reference key="1">
    <citation type="journal article" date="2007" name="PLoS Genet.">
        <title>Patterns and implications of gene gain and loss in the evolution of Prochlorococcus.</title>
        <authorList>
            <person name="Kettler G.C."/>
            <person name="Martiny A.C."/>
            <person name="Huang K."/>
            <person name="Zucker J."/>
            <person name="Coleman M.L."/>
            <person name="Rodrigue S."/>
            <person name="Chen F."/>
            <person name="Lapidus A."/>
            <person name="Ferriera S."/>
            <person name="Johnson J."/>
            <person name="Steglich C."/>
            <person name="Church G.M."/>
            <person name="Richardson P."/>
            <person name="Chisholm S.W."/>
        </authorList>
    </citation>
    <scope>NUCLEOTIDE SEQUENCE [LARGE SCALE GENOMIC DNA]</scope>
    <source>
        <strain>MIT 9211</strain>
    </source>
</reference>
<organism>
    <name type="scientific">Prochlorococcus marinus (strain MIT 9211)</name>
    <dbReference type="NCBI Taxonomy" id="93059"/>
    <lineage>
        <taxon>Bacteria</taxon>
        <taxon>Bacillati</taxon>
        <taxon>Cyanobacteriota</taxon>
        <taxon>Cyanophyceae</taxon>
        <taxon>Synechococcales</taxon>
        <taxon>Prochlorococcaceae</taxon>
        <taxon>Prochlorococcus</taxon>
    </lineage>
</organism>
<accession>A9BB49</accession>
<evidence type="ECO:0000255" key="1">
    <source>
        <dbReference type="HAMAP-Rule" id="MF_00278"/>
    </source>
</evidence>
<proteinExistence type="inferred from homology"/>
<gene>
    <name evidence="1" type="primary">hisH</name>
    <name type="ordered locus">P9211_11301</name>
</gene>
<sequence>MNTNIGIIDYGMGNLHSVQQSFKRLDQSIRIVKSPNDVHECNALILPGVGSFDPAMENLRRTDLIPKIKSWVKDGKPLLGICLGLQLIFESSEEGNSEGLGLLKGKVCNLPRNTKERIPHMGWSLLKQIKECPLLDNENTSRWMYFVHSYSAIPSPEDLAATVSFGDSEVTAIVWKDSLGACQFHPEKSGKSGQRLLSSWLKWLHEKNSDLS</sequence>
<feature type="chain" id="PRO_1000114787" description="Imidazole glycerol phosphate synthase subunit HisH">
    <location>
        <begin position="1"/>
        <end position="212"/>
    </location>
</feature>
<feature type="domain" description="Glutamine amidotransferase type-1" evidence="1">
    <location>
        <begin position="4"/>
        <end position="210"/>
    </location>
</feature>
<feature type="active site" description="Nucleophile" evidence="1">
    <location>
        <position position="82"/>
    </location>
</feature>
<feature type="active site" evidence="1">
    <location>
        <position position="185"/>
    </location>
</feature>
<feature type="active site" evidence="1">
    <location>
        <position position="187"/>
    </location>
</feature>
<protein>
    <recommendedName>
        <fullName evidence="1">Imidazole glycerol phosphate synthase subunit HisH</fullName>
        <ecNumber evidence="1">4.3.2.10</ecNumber>
    </recommendedName>
    <alternativeName>
        <fullName evidence="1">IGP synthase glutaminase subunit</fullName>
        <ecNumber evidence="1">3.5.1.2</ecNumber>
    </alternativeName>
    <alternativeName>
        <fullName evidence="1">IGP synthase subunit HisH</fullName>
    </alternativeName>
    <alternativeName>
        <fullName evidence="1">ImGP synthase subunit HisH</fullName>
        <shortName evidence="1">IGPS subunit HisH</shortName>
    </alternativeName>
</protein>
<keyword id="KW-0028">Amino-acid biosynthesis</keyword>
<keyword id="KW-0963">Cytoplasm</keyword>
<keyword id="KW-0315">Glutamine amidotransferase</keyword>
<keyword id="KW-0368">Histidine biosynthesis</keyword>
<keyword id="KW-0378">Hydrolase</keyword>
<keyword id="KW-0456">Lyase</keyword>
<keyword id="KW-1185">Reference proteome</keyword>
<dbReference type="EC" id="4.3.2.10" evidence="1"/>
<dbReference type="EC" id="3.5.1.2" evidence="1"/>
<dbReference type="EMBL" id="CP000878">
    <property type="protein sequence ID" value="ABX09061.1"/>
    <property type="molecule type" value="Genomic_DNA"/>
</dbReference>
<dbReference type="RefSeq" id="WP_012195682.1">
    <property type="nucleotide sequence ID" value="NC_009976.1"/>
</dbReference>
<dbReference type="SMR" id="A9BB49"/>
<dbReference type="STRING" id="93059.P9211_11301"/>
<dbReference type="KEGG" id="pmj:P9211_11301"/>
<dbReference type="eggNOG" id="COG0118">
    <property type="taxonomic scope" value="Bacteria"/>
</dbReference>
<dbReference type="HOGENOM" id="CLU_071837_2_2_3"/>
<dbReference type="OrthoDB" id="9807137at2"/>
<dbReference type="UniPathway" id="UPA00031">
    <property type="reaction ID" value="UER00010"/>
</dbReference>
<dbReference type="Proteomes" id="UP000000788">
    <property type="component" value="Chromosome"/>
</dbReference>
<dbReference type="GO" id="GO:0005737">
    <property type="term" value="C:cytoplasm"/>
    <property type="evidence" value="ECO:0007669"/>
    <property type="project" value="UniProtKB-SubCell"/>
</dbReference>
<dbReference type="GO" id="GO:0004359">
    <property type="term" value="F:glutaminase activity"/>
    <property type="evidence" value="ECO:0007669"/>
    <property type="project" value="UniProtKB-EC"/>
</dbReference>
<dbReference type="GO" id="GO:0000107">
    <property type="term" value="F:imidazoleglycerol-phosphate synthase activity"/>
    <property type="evidence" value="ECO:0007669"/>
    <property type="project" value="UniProtKB-UniRule"/>
</dbReference>
<dbReference type="GO" id="GO:0016829">
    <property type="term" value="F:lyase activity"/>
    <property type="evidence" value="ECO:0007669"/>
    <property type="project" value="UniProtKB-KW"/>
</dbReference>
<dbReference type="GO" id="GO:0000105">
    <property type="term" value="P:L-histidine biosynthetic process"/>
    <property type="evidence" value="ECO:0007669"/>
    <property type="project" value="UniProtKB-UniRule"/>
</dbReference>
<dbReference type="CDD" id="cd01748">
    <property type="entry name" value="GATase1_IGP_Synthase"/>
    <property type="match status" value="1"/>
</dbReference>
<dbReference type="Gene3D" id="3.40.50.880">
    <property type="match status" value="1"/>
</dbReference>
<dbReference type="HAMAP" id="MF_00278">
    <property type="entry name" value="HisH"/>
    <property type="match status" value="1"/>
</dbReference>
<dbReference type="InterPro" id="IPR029062">
    <property type="entry name" value="Class_I_gatase-like"/>
</dbReference>
<dbReference type="InterPro" id="IPR017926">
    <property type="entry name" value="GATASE"/>
</dbReference>
<dbReference type="InterPro" id="IPR010139">
    <property type="entry name" value="Imidazole-glycPsynth_HisH"/>
</dbReference>
<dbReference type="NCBIfam" id="TIGR01855">
    <property type="entry name" value="IMP_synth_hisH"/>
    <property type="match status" value="1"/>
</dbReference>
<dbReference type="PANTHER" id="PTHR42701">
    <property type="entry name" value="IMIDAZOLE GLYCEROL PHOSPHATE SYNTHASE SUBUNIT HISH"/>
    <property type="match status" value="1"/>
</dbReference>
<dbReference type="PANTHER" id="PTHR42701:SF1">
    <property type="entry name" value="IMIDAZOLE GLYCEROL PHOSPHATE SYNTHASE SUBUNIT HISH"/>
    <property type="match status" value="1"/>
</dbReference>
<dbReference type="Pfam" id="PF00117">
    <property type="entry name" value="GATase"/>
    <property type="match status" value="1"/>
</dbReference>
<dbReference type="PIRSF" id="PIRSF000495">
    <property type="entry name" value="Amidotransf_hisH"/>
    <property type="match status" value="1"/>
</dbReference>
<dbReference type="SUPFAM" id="SSF52317">
    <property type="entry name" value="Class I glutamine amidotransferase-like"/>
    <property type="match status" value="1"/>
</dbReference>
<dbReference type="PROSITE" id="PS51273">
    <property type="entry name" value="GATASE_TYPE_1"/>
    <property type="match status" value="1"/>
</dbReference>